<dbReference type="EMBL" id="BA000043">
    <property type="protein sequence ID" value="BAD74764.1"/>
    <property type="molecule type" value="Genomic_DNA"/>
</dbReference>
<dbReference type="RefSeq" id="WP_011229983.1">
    <property type="nucleotide sequence ID" value="NC_006510.1"/>
</dbReference>
<dbReference type="SMR" id="Q5L2R6"/>
<dbReference type="STRING" id="235909.GK0479"/>
<dbReference type="KEGG" id="gka:GK0479"/>
<dbReference type="eggNOG" id="ENOG50313Y4">
    <property type="taxonomic scope" value="Bacteria"/>
</dbReference>
<dbReference type="HOGENOM" id="CLU_143991_0_0_9"/>
<dbReference type="Proteomes" id="UP000001172">
    <property type="component" value="Chromosome"/>
</dbReference>
<dbReference type="GO" id="GO:0005886">
    <property type="term" value="C:plasma membrane"/>
    <property type="evidence" value="ECO:0007669"/>
    <property type="project" value="UniProtKB-SubCell"/>
</dbReference>
<dbReference type="HAMAP" id="MF_01502">
    <property type="entry name" value="UPF0295"/>
    <property type="match status" value="1"/>
</dbReference>
<dbReference type="InterPro" id="IPR020912">
    <property type="entry name" value="UPF0295"/>
</dbReference>
<dbReference type="NCBIfam" id="NF002796">
    <property type="entry name" value="PRK02935.1"/>
    <property type="match status" value="1"/>
</dbReference>
<dbReference type="Pfam" id="PF11023">
    <property type="entry name" value="DUF2614"/>
    <property type="match status" value="1"/>
</dbReference>
<accession>Q5L2R6</accession>
<reference key="1">
    <citation type="journal article" date="2004" name="Nucleic Acids Res.">
        <title>Thermoadaptation trait revealed by the genome sequence of thermophilic Geobacillus kaustophilus.</title>
        <authorList>
            <person name="Takami H."/>
            <person name="Takaki Y."/>
            <person name="Chee G.-J."/>
            <person name="Nishi S."/>
            <person name="Shimamura S."/>
            <person name="Suzuki H."/>
            <person name="Matsui S."/>
            <person name="Uchiyama I."/>
        </authorList>
    </citation>
    <scope>NUCLEOTIDE SEQUENCE [LARGE SCALE GENOMIC DNA]</scope>
    <source>
        <strain>HTA426</strain>
    </source>
</reference>
<protein>
    <recommendedName>
        <fullName evidence="1">UPF0295 protein GK0479</fullName>
    </recommendedName>
</protein>
<comment type="subcellular location">
    <subcellularLocation>
        <location evidence="1">Cell membrane</location>
        <topology evidence="1">Multi-pass membrane protein</topology>
    </subcellularLocation>
</comment>
<comment type="similarity">
    <text evidence="1">Belongs to the UPF0295 family.</text>
</comment>
<sequence>MSIKYSSKINKIRTFALSLIFIGVIVMYLGLFFRTSPVIMTLFMLFGMLFLVASGIVYFWIGTLSTRAVQVVCPSCGKVTKMLGRVDLCMFCREPLTLDRELEGKEFDEKYNKKRKS</sequence>
<organism>
    <name type="scientific">Geobacillus kaustophilus (strain HTA426)</name>
    <dbReference type="NCBI Taxonomy" id="235909"/>
    <lineage>
        <taxon>Bacteria</taxon>
        <taxon>Bacillati</taxon>
        <taxon>Bacillota</taxon>
        <taxon>Bacilli</taxon>
        <taxon>Bacillales</taxon>
        <taxon>Anoxybacillaceae</taxon>
        <taxon>Geobacillus</taxon>
        <taxon>Geobacillus thermoleovorans group</taxon>
    </lineage>
</organism>
<evidence type="ECO:0000255" key="1">
    <source>
        <dbReference type="HAMAP-Rule" id="MF_01502"/>
    </source>
</evidence>
<proteinExistence type="inferred from homology"/>
<name>Y479_GEOKA</name>
<feature type="chain" id="PRO_0000053856" description="UPF0295 protein GK0479">
    <location>
        <begin position="1"/>
        <end position="117"/>
    </location>
</feature>
<feature type="transmembrane region" description="Helical" evidence="1">
    <location>
        <begin position="12"/>
        <end position="32"/>
    </location>
</feature>
<feature type="transmembrane region" description="Helical" evidence="1">
    <location>
        <begin position="42"/>
        <end position="62"/>
    </location>
</feature>
<gene>
    <name type="ordered locus">GK0479</name>
</gene>
<keyword id="KW-1003">Cell membrane</keyword>
<keyword id="KW-0472">Membrane</keyword>
<keyword id="KW-1185">Reference proteome</keyword>
<keyword id="KW-0812">Transmembrane</keyword>
<keyword id="KW-1133">Transmembrane helix</keyword>